<gene>
    <name evidence="1" type="primary">pdxJ</name>
    <name type="ordered locus">BSUIS_A1435</name>
</gene>
<sequence>MPAKLSVNLNAIAMLRNRRDLPWPSVTGLGRAALAAGAAGLTVHPRPDQRHIRFSDLGDIRALIDDEYPQAEFNIEGFPSEAFLDLVEKHEPEQVTLVPDDPMQATSDHGWDFMSKADFLAPIVARLKGRGMRVSLFADPDSLGYERAKAIGADHVELYTGPYGATHDDPAAAARELDRLEKAARAATALGLAVNAGHDLTVDNLPALVKRIPQLAEVSIGHGLTADALMYGIPVTVSRYITALAG</sequence>
<dbReference type="EC" id="2.6.99.2" evidence="1"/>
<dbReference type="EMBL" id="CP000911">
    <property type="protein sequence ID" value="ABY38473.1"/>
    <property type="molecule type" value="Genomic_DNA"/>
</dbReference>
<dbReference type="RefSeq" id="WP_004690972.1">
    <property type="nucleotide sequence ID" value="NC_010169.1"/>
</dbReference>
<dbReference type="SMR" id="B0CHH2"/>
<dbReference type="KEGG" id="bmt:BSUIS_A1435"/>
<dbReference type="HOGENOM" id="CLU_074563_1_0_5"/>
<dbReference type="UniPathway" id="UPA00244">
    <property type="reaction ID" value="UER00313"/>
</dbReference>
<dbReference type="Proteomes" id="UP000008545">
    <property type="component" value="Chromosome I"/>
</dbReference>
<dbReference type="GO" id="GO:0005829">
    <property type="term" value="C:cytosol"/>
    <property type="evidence" value="ECO:0007669"/>
    <property type="project" value="TreeGrafter"/>
</dbReference>
<dbReference type="GO" id="GO:0033856">
    <property type="term" value="F:pyridoxine 5'-phosphate synthase activity"/>
    <property type="evidence" value="ECO:0007669"/>
    <property type="project" value="UniProtKB-EC"/>
</dbReference>
<dbReference type="GO" id="GO:0008615">
    <property type="term" value="P:pyridoxine biosynthetic process"/>
    <property type="evidence" value="ECO:0007669"/>
    <property type="project" value="UniProtKB-UniRule"/>
</dbReference>
<dbReference type="CDD" id="cd00003">
    <property type="entry name" value="PNPsynthase"/>
    <property type="match status" value="1"/>
</dbReference>
<dbReference type="Gene3D" id="3.20.20.70">
    <property type="entry name" value="Aldolase class I"/>
    <property type="match status" value="1"/>
</dbReference>
<dbReference type="HAMAP" id="MF_00279">
    <property type="entry name" value="PdxJ"/>
    <property type="match status" value="1"/>
</dbReference>
<dbReference type="InterPro" id="IPR013785">
    <property type="entry name" value="Aldolase_TIM"/>
</dbReference>
<dbReference type="InterPro" id="IPR004569">
    <property type="entry name" value="PyrdxlP_synth_PdxJ"/>
</dbReference>
<dbReference type="InterPro" id="IPR036130">
    <property type="entry name" value="Pyridoxine-5'_phos_synth"/>
</dbReference>
<dbReference type="NCBIfam" id="TIGR00559">
    <property type="entry name" value="pdxJ"/>
    <property type="match status" value="1"/>
</dbReference>
<dbReference type="NCBIfam" id="NF003626">
    <property type="entry name" value="PRK05265.1-4"/>
    <property type="match status" value="1"/>
</dbReference>
<dbReference type="PANTHER" id="PTHR30456">
    <property type="entry name" value="PYRIDOXINE 5'-PHOSPHATE SYNTHASE"/>
    <property type="match status" value="1"/>
</dbReference>
<dbReference type="PANTHER" id="PTHR30456:SF0">
    <property type="entry name" value="PYRIDOXINE 5'-PHOSPHATE SYNTHASE"/>
    <property type="match status" value="1"/>
</dbReference>
<dbReference type="Pfam" id="PF03740">
    <property type="entry name" value="PdxJ"/>
    <property type="match status" value="1"/>
</dbReference>
<dbReference type="SUPFAM" id="SSF63892">
    <property type="entry name" value="Pyridoxine 5'-phosphate synthase"/>
    <property type="match status" value="1"/>
</dbReference>
<organism>
    <name type="scientific">Brucella suis (strain ATCC 23445 / NCTC 10510)</name>
    <dbReference type="NCBI Taxonomy" id="470137"/>
    <lineage>
        <taxon>Bacteria</taxon>
        <taxon>Pseudomonadati</taxon>
        <taxon>Pseudomonadota</taxon>
        <taxon>Alphaproteobacteria</taxon>
        <taxon>Hyphomicrobiales</taxon>
        <taxon>Brucellaceae</taxon>
        <taxon>Brucella/Ochrobactrum group</taxon>
        <taxon>Brucella</taxon>
    </lineage>
</organism>
<protein>
    <recommendedName>
        <fullName evidence="1">Pyridoxine 5'-phosphate synthase</fullName>
        <shortName evidence="1">PNP synthase</shortName>
        <ecNumber evidence="1">2.6.99.2</ecNumber>
    </recommendedName>
</protein>
<feature type="chain" id="PRO_1000078814" description="Pyridoxine 5'-phosphate synthase">
    <location>
        <begin position="1"/>
        <end position="246"/>
    </location>
</feature>
<feature type="active site" description="Proton acceptor" evidence="1">
    <location>
        <position position="44"/>
    </location>
</feature>
<feature type="active site" description="Proton acceptor" evidence="1">
    <location>
        <position position="76"/>
    </location>
</feature>
<feature type="active site" description="Proton donor" evidence="1">
    <location>
        <position position="198"/>
    </location>
</feature>
<feature type="binding site" evidence="1">
    <location>
        <position position="8"/>
    </location>
    <ligand>
        <name>3-amino-2-oxopropyl phosphate</name>
        <dbReference type="ChEBI" id="CHEBI:57279"/>
    </ligand>
</feature>
<feature type="binding site" evidence="1">
    <location>
        <position position="19"/>
    </location>
    <ligand>
        <name>3-amino-2-oxopropyl phosphate</name>
        <dbReference type="ChEBI" id="CHEBI:57279"/>
    </ligand>
</feature>
<feature type="binding site" evidence="1">
    <location>
        <position position="46"/>
    </location>
    <ligand>
        <name>1-deoxy-D-xylulose 5-phosphate</name>
        <dbReference type="ChEBI" id="CHEBI:57792"/>
    </ligand>
</feature>
<feature type="binding site" evidence="1">
    <location>
        <position position="51"/>
    </location>
    <ligand>
        <name>1-deoxy-D-xylulose 5-phosphate</name>
        <dbReference type="ChEBI" id="CHEBI:57792"/>
    </ligand>
</feature>
<feature type="binding site" evidence="1">
    <location>
        <position position="106"/>
    </location>
    <ligand>
        <name>1-deoxy-D-xylulose 5-phosphate</name>
        <dbReference type="ChEBI" id="CHEBI:57792"/>
    </ligand>
</feature>
<feature type="binding site" evidence="1">
    <location>
        <position position="199"/>
    </location>
    <ligand>
        <name>3-amino-2-oxopropyl phosphate</name>
        <dbReference type="ChEBI" id="CHEBI:57279"/>
    </ligand>
</feature>
<feature type="binding site" evidence="1">
    <location>
        <begin position="221"/>
        <end position="222"/>
    </location>
    <ligand>
        <name>3-amino-2-oxopropyl phosphate</name>
        <dbReference type="ChEBI" id="CHEBI:57279"/>
    </ligand>
</feature>
<feature type="site" description="Transition state stabilizer" evidence="1">
    <location>
        <position position="157"/>
    </location>
</feature>
<proteinExistence type="inferred from homology"/>
<keyword id="KW-0963">Cytoplasm</keyword>
<keyword id="KW-0664">Pyridoxine biosynthesis</keyword>
<keyword id="KW-0808">Transferase</keyword>
<accession>B0CHH2</accession>
<evidence type="ECO:0000255" key="1">
    <source>
        <dbReference type="HAMAP-Rule" id="MF_00279"/>
    </source>
</evidence>
<reference key="1">
    <citation type="submission" date="2007-12" db="EMBL/GenBank/DDBJ databases">
        <title>Brucella suis ATCC 23445 whole genome shotgun sequencing project.</title>
        <authorList>
            <person name="Setubal J.C."/>
            <person name="Bowns C."/>
            <person name="Boyle S."/>
            <person name="Crasta O.R."/>
            <person name="Czar M.J."/>
            <person name="Dharmanolla C."/>
            <person name="Gillespie J.J."/>
            <person name="Kenyon R.W."/>
            <person name="Lu J."/>
            <person name="Mane S."/>
            <person name="Mohapatra S."/>
            <person name="Nagrani S."/>
            <person name="Purkayastha A."/>
            <person name="Rajasimha H.K."/>
            <person name="Shallom J.M."/>
            <person name="Shallom S."/>
            <person name="Shukla M."/>
            <person name="Snyder E.E."/>
            <person name="Sobral B.W."/>
            <person name="Wattam A.R."/>
            <person name="Will R."/>
            <person name="Williams K."/>
            <person name="Yoo H."/>
            <person name="Bruce D."/>
            <person name="Detter C."/>
            <person name="Munk C."/>
            <person name="Brettin T.S."/>
        </authorList>
    </citation>
    <scope>NUCLEOTIDE SEQUENCE [LARGE SCALE GENOMIC DNA]</scope>
    <source>
        <strain>ATCC 23445 / NCTC 10510</strain>
    </source>
</reference>
<name>PDXJ_BRUSI</name>
<comment type="function">
    <text evidence="1">Catalyzes the complicated ring closure reaction between the two acyclic compounds 1-deoxy-D-xylulose-5-phosphate (DXP) and 3-amino-2-oxopropyl phosphate (1-amino-acetone-3-phosphate or AAP) to form pyridoxine 5'-phosphate (PNP) and inorganic phosphate.</text>
</comment>
<comment type="catalytic activity">
    <reaction evidence="1">
        <text>3-amino-2-oxopropyl phosphate + 1-deoxy-D-xylulose 5-phosphate = pyridoxine 5'-phosphate + phosphate + 2 H2O + H(+)</text>
        <dbReference type="Rhea" id="RHEA:15265"/>
        <dbReference type="ChEBI" id="CHEBI:15377"/>
        <dbReference type="ChEBI" id="CHEBI:15378"/>
        <dbReference type="ChEBI" id="CHEBI:43474"/>
        <dbReference type="ChEBI" id="CHEBI:57279"/>
        <dbReference type="ChEBI" id="CHEBI:57792"/>
        <dbReference type="ChEBI" id="CHEBI:58589"/>
        <dbReference type="EC" id="2.6.99.2"/>
    </reaction>
</comment>
<comment type="pathway">
    <text evidence="1">Cofactor biosynthesis; pyridoxine 5'-phosphate biosynthesis; pyridoxine 5'-phosphate from D-erythrose 4-phosphate: step 5/5.</text>
</comment>
<comment type="subunit">
    <text evidence="1">Homooctamer; tetramer of dimers.</text>
</comment>
<comment type="subcellular location">
    <subcellularLocation>
        <location evidence="1">Cytoplasm</location>
    </subcellularLocation>
</comment>
<comment type="similarity">
    <text evidence="1">Belongs to the PNP synthase family.</text>
</comment>